<keyword id="KW-0963">Cytoplasm</keyword>
<keyword id="KW-0648">Protein biosynthesis</keyword>
<keyword id="KW-1185">Reference proteome</keyword>
<feature type="chain" id="PRO_1000090752" description="Ribosome-recycling factor">
    <location>
        <begin position="1"/>
        <end position="185"/>
    </location>
</feature>
<proteinExistence type="inferred from homology"/>
<gene>
    <name evidence="1" type="primary">frr</name>
    <name type="ordered locus">KRH_16220</name>
</gene>
<name>RRF_KOCRD</name>
<dbReference type="EMBL" id="AP009152">
    <property type="protein sequence ID" value="BAG29969.1"/>
    <property type="molecule type" value="Genomic_DNA"/>
</dbReference>
<dbReference type="RefSeq" id="WP_012398690.1">
    <property type="nucleotide sequence ID" value="NC_010617.1"/>
</dbReference>
<dbReference type="SMR" id="B2GKT3"/>
<dbReference type="STRING" id="378753.KRH_16220"/>
<dbReference type="KEGG" id="krh:KRH_16220"/>
<dbReference type="eggNOG" id="COG0233">
    <property type="taxonomic scope" value="Bacteria"/>
</dbReference>
<dbReference type="HOGENOM" id="CLU_073981_2_0_11"/>
<dbReference type="OrthoDB" id="9804006at2"/>
<dbReference type="Proteomes" id="UP000008838">
    <property type="component" value="Chromosome"/>
</dbReference>
<dbReference type="GO" id="GO:0005737">
    <property type="term" value="C:cytoplasm"/>
    <property type="evidence" value="ECO:0007669"/>
    <property type="project" value="UniProtKB-SubCell"/>
</dbReference>
<dbReference type="GO" id="GO:0043023">
    <property type="term" value="F:ribosomal large subunit binding"/>
    <property type="evidence" value="ECO:0007669"/>
    <property type="project" value="TreeGrafter"/>
</dbReference>
<dbReference type="GO" id="GO:0006415">
    <property type="term" value="P:translational termination"/>
    <property type="evidence" value="ECO:0007669"/>
    <property type="project" value="UniProtKB-UniRule"/>
</dbReference>
<dbReference type="CDD" id="cd00520">
    <property type="entry name" value="RRF"/>
    <property type="match status" value="1"/>
</dbReference>
<dbReference type="FunFam" id="1.10.132.20:FF:000001">
    <property type="entry name" value="Ribosome-recycling factor"/>
    <property type="match status" value="1"/>
</dbReference>
<dbReference type="FunFam" id="3.30.1360.40:FF:000001">
    <property type="entry name" value="Ribosome-recycling factor"/>
    <property type="match status" value="1"/>
</dbReference>
<dbReference type="Gene3D" id="3.30.1360.40">
    <property type="match status" value="1"/>
</dbReference>
<dbReference type="Gene3D" id="1.10.132.20">
    <property type="entry name" value="Ribosome-recycling factor"/>
    <property type="match status" value="1"/>
</dbReference>
<dbReference type="HAMAP" id="MF_00040">
    <property type="entry name" value="RRF"/>
    <property type="match status" value="1"/>
</dbReference>
<dbReference type="InterPro" id="IPR002661">
    <property type="entry name" value="Ribosome_recyc_fac"/>
</dbReference>
<dbReference type="InterPro" id="IPR023584">
    <property type="entry name" value="Ribosome_recyc_fac_dom"/>
</dbReference>
<dbReference type="InterPro" id="IPR036191">
    <property type="entry name" value="RRF_sf"/>
</dbReference>
<dbReference type="NCBIfam" id="TIGR00496">
    <property type="entry name" value="frr"/>
    <property type="match status" value="1"/>
</dbReference>
<dbReference type="PANTHER" id="PTHR20982:SF3">
    <property type="entry name" value="MITOCHONDRIAL RIBOSOME RECYCLING FACTOR PSEUDO 1"/>
    <property type="match status" value="1"/>
</dbReference>
<dbReference type="PANTHER" id="PTHR20982">
    <property type="entry name" value="RIBOSOME RECYCLING FACTOR"/>
    <property type="match status" value="1"/>
</dbReference>
<dbReference type="Pfam" id="PF01765">
    <property type="entry name" value="RRF"/>
    <property type="match status" value="1"/>
</dbReference>
<dbReference type="SUPFAM" id="SSF55194">
    <property type="entry name" value="Ribosome recycling factor, RRF"/>
    <property type="match status" value="1"/>
</dbReference>
<accession>B2GKT3</accession>
<comment type="function">
    <text evidence="1">Responsible for the release of ribosomes from messenger RNA at the termination of protein biosynthesis. May increase the efficiency of translation by recycling ribosomes from one round of translation to another.</text>
</comment>
<comment type="subcellular location">
    <subcellularLocation>
        <location evidence="1">Cytoplasm</location>
    </subcellularLocation>
</comment>
<comment type="similarity">
    <text evidence="1">Belongs to the RRF family.</text>
</comment>
<organism>
    <name type="scientific">Kocuria rhizophila (strain ATCC 9341 / DSM 348 / NBRC 103217 / DC2201)</name>
    <dbReference type="NCBI Taxonomy" id="378753"/>
    <lineage>
        <taxon>Bacteria</taxon>
        <taxon>Bacillati</taxon>
        <taxon>Actinomycetota</taxon>
        <taxon>Actinomycetes</taxon>
        <taxon>Micrococcales</taxon>
        <taxon>Micrococcaceae</taxon>
        <taxon>Kocuria</taxon>
    </lineage>
</organism>
<sequence>MISDVLSDATTRMGKAVDAAKTDFSTVRTGRANPALFSSLLVAYYGTPTPLQQLASFQTPEARTLLITPYDRSALNDIEKALRDSDIGANPANDGNVIRVVMPELTEERRKEYVKIVHGKAEDARVSVRNVRRHAKEAIEKLVKDGDVGEDDGKRGEKDLDAATKKHIDQVDELLKNKEAELLGA</sequence>
<reference key="1">
    <citation type="journal article" date="2008" name="J. Bacteriol.">
        <title>Complete genome sequence of the soil actinomycete Kocuria rhizophila.</title>
        <authorList>
            <person name="Takarada H."/>
            <person name="Sekine M."/>
            <person name="Kosugi H."/>
            <person name="Matsuo Y."/>
            <person name="Fujisawa T."/>
            <person name="Omata S."/>
            <person name="Kishi E."/>
            <person name="Shimizu A."/>
            <person name="Tsukatani N."/>
            <person name="Tanikawa S."/>
            <person name="Fujita N."/>
            <person name="Harayama S."/>
        </authorList>
    </citation>
    <scope>NUCLEOTIDE SEQUENCE [LARGE SCALE GENOMIC DNA]</scope>
    <source>
        <strain>ATCC 9341 / DSM 348 / NBRC 103217 / DC2201</strain>
    </source>
</reference>
<evidence type="ECO:0000255" key="1">
    <source>
        <dbReference type="HAMAP-Rule" id="MF_00040"/>
    </source>
</evidence>
<protein>
    <recommendedName>
        <fullName evidence="1">Ribosome-recycling factor</fullName>
        <shortName evidence="1">RRF</shortName>
    </recommendedName>
    <alternativeName>
        <fullName evidence="1">Ribosome-releasing factor</fullName>
    </alternativeName>
</protein>